<proteinExistence type="inferred from homology"/>
<comment type="function">
    <text evidence="2">Thiol-specific peroxidase that catalyzes the reduction of hydrogen peroxide and organic hydroperoxides to water and alcohols, respectively. Plays a role in cell protection against oxidative stress by detoxifying peroxides.</text>
</comment>
<comment type="catalytic activity">
    <reaction evidence="2">
        <text>a hydroperoxide + [thioredoxin]-dithiol = an alcohol + [thioredoxin]-disulfide + H2O</text>
        <dbReference type="Rhea" id="RHEA:62620"/>
        <dbReference type="Rhea" id="RHEA-COMP:10698"/>
        <dbReference type="Rhea" id="RHEA-COMP:10700"/>
        <dbReference type="ChEBI" id="CHEBI:15377"/>
        <dbReference type="ChEBI" id="CHEBI:29950"/>
        <dbReference type="ChEBI" id="CHEBI:30879"/>
        <dbReference type="ChEBI" id="CHEBI:35924"/>
        <dbReference type="ChEBI" id="CHEBI:50058"/>
        <dbReference type="EC" id="1.11.1.24"/>
    </reaction>
</comment>
<comment type="subunit">
    <text evidence="2">Homodimer; disulfide-linked, upon oxidation.</text>
</comment>
<comment type="subcellular location">
    <subcellularLocation>
        <location evidence="4">Plastid</location>
        <location evidence="4">Chloroplast</location>
    </subcellularLocation>
</comment>
<comment type="PTM">
    <text evidence="1">The Cys-53-SH group is the primary site of oxidation by H(2)O(2), and the oxidized Cys-53 (probably Cys-SOH) rapidly reacts with Cys-174-SH of the other subunit to form an intermolecular disulfide. This disulfide is subsequently reduced by thioredoxin (By similarity).</text>
</comment>
<comment type="miscellaneous">
    <text evidence="2">The active site is a conserved redox-active cysteine residue, the peroxidatic cysteine (C(P)), which makes the nucleophilic attack on the peroxide substrate. The peroxide oxidizes the C(P)-SH to cysteine sulfenic acid (C(P)-SOH), which then reacts with another cysteine residue, the resolving cysteine (C(R)), to form a disulfide bridge. The disulfide is subsequently reduced by an appropriate electron donor to complete the catalytic cycle. In this typical 2-Cys peroxiredoxin, C(R) is provided by the other dimeric subunit to form an intersubunit disulfide. The disulfide is subsequently reduced by thioredoxin.</text>
</comment>
<comment type="similarity">
    <text evidence="4">Belongs to the peroxiredoxin family. AhpC/Prx1 subfamily.</text>
</comment>
<geneLocation type="chloroplast"/>
<protein>
    <recommendedName>
        <fullName>Putative peroxiredoxin ycf42</fullName>
        <ecNumber evidence="2">1.11.1.24</ecNumber>
    </recommendedName>
    <alternativeName>
        <fullName>Thioredoxin peroxidase</fullName>
    </alternativeName>
</protein>
<organism>
    <name type="scientific">Pyropia yezoensis</name>
    <name type="common">Susabi-nori</name>
    <name type="synonym">Porphyra yezoensis</name>
    <dbReference type="NCBI Taxonomy" id="2788"/>
    <lineage>
        <taxon>Eukaryota</taxon>
        <taxon>Rhodophyta</taxon>
        <taxon>Bangiophyceae</taxon>
        <taxon>Bangiales</taxon>
        <taxon>Bangiaceae</taxon>
        <taxon>Pyropia</taxon>
    </lineage>
</organism>
<name>YCF42_PYRYE</name>
<gene>
    <name type="primary">ycf42</name>
</gene>
<dbReference type="EC" id="1.11.1.24" evidence="2"/>
<dbReference type="EMBL" id="AP006715">
    <property type="protein sequence ID" value="BAE92397.1"/>
    <property type="molecule type" value="Genomic_DNA"/>
</dbReference>
<dbReference type="RefSeq" id="YP_536954.1">
    <property type="nucleotide sequence ID" value="NC_007932.1"/>
</dbReference>
<dbReference type="SMR" id="Q1XDL4"/>
<dbReference type="PeroxiBase" id="11149">
    <property type="entry name" value="Py2CysPrx"/>
</dbReference>
<dbReference type="GO" id="GO:0009507">
    <property type="term" value="C:chloroplast"/>
    <property type="evidence" value="ECO:0007669"/>
    <property type="project" value="UniProtKB-SubCell"/>
</dbReference>
<dbReference type="GO" id="GO:0008379">
    <property type="term" value="F:thioredoxin peroxidase activity"/>
    <property type="evidence" value="ECO:0007669"/>
    <property type="project" value="TreeGrafter"/>
</dbReference>
<dbReference type="GO" id="GO:0045454">
    <property type="term" value="P:cell redox homeostasis"/>
    <property type="evidence" value="ECO:0007669"/>
    <property type="project" value="TreeGrafter"/>
</dbReference>
<dbReference type="GO" id="GO:0033554">
    <property type="term" value="P:cellular response to stress"/>
    <property type="evidence" value="ECO:0007669"/>
    <property type="project" value="TreeGrafter"/>
</dbReference>
<dbReference type="GO" id="GO:0042744">
    <property type="term" value="P:hydrogen peroxide catabolic process"/>
    <property type="evidence" value="ECO:0007669"/>
    <property type="project" value="TreeGrafter"/>
</dbReference>
<dbReference type="GO" id="GO:0006979">
    <property type="term" value="P:response to oxidative stress"/>
    <property type="evidence" value="ECO:0007669"/>
    <property type="project" value="TreeGrafter"/>
</dbReference>
<dbReference type="CDD" id="cd03015">
    <property type="entry name" value="PRX_Typ2cys"/>
    <property type="match status" value="1"/>
</dbReference>
<dbReference type="FunFam" id="3.40.30.10:FF:000063">
    <property type="entry name" value="2-Cys peroxiredoxin BAS1, chloroplastic"/>
    <property type="match status" value="1"/>
</dbReference>
<dbReference type="Gene3D" id="3.40.30.10">
    <property type="entry name" value="Glutaredoxin"/>
    <property type="match status" value="1"/>
</dbReference>
<dbReference type="InterPro" id="IPR000866">
    <property type="entry name" value="AhpC/TSA"/>
</dbReference>
<dbReference type="InterPro" id="IPR050217">
    <property type="entry name" value="Peroxiredoxin"/>
</dbReference>
<dbReference type="InterPro" id="IPR024706">
    <property type="entry name" value="Peroxiredoxin_AhpC-typ"/>
</dbReference>
<dbReference type="InterPro" id="IPR019479">
    <property type="entry name" value="Peroxiredoxin_C"/>
</dbReference>
<dbReference type="InterPro" id="IPR036249">
    <property type="entry name" value="Thioredoxin-like_sf"/>
</dbReference>
<dbReference type="InterPro" id="IPR013766">
    <property type="entry name" value="Thioredoxin_domain"/>
</dbReference>
<dbReference type="PANTHER" id="PTHR10681">
    <property type="entry name" value="THIOREDOXIN PEROXIDASE"/>
    <property type="match status" value="1"/>
</dbReference>
<dbReference type="PANTHER" id="PTHR10681:SF128">
    <property type="entry name" value="THIOREDOXIN-DEPENDENT PEROXIDE REDUCTASE, MITOCHONDRIAL"/>
    <property type="match status" value="1"/>
</dbReference>
<dbReference type="Pfam" id="PF10417">
    <property type="entry name" value="1-cysPrx_C"/>
    <property type="match status" value="1"/>
</dbReference>
<dbReference type="Pfam" id="PF00578">
    <property type="entry name" value="AhpC-TSA"/>
    <property type="match status" value="1"/>
</dbReference>
<dbReference type="PIRSF" id="PIRSF000239">
    <property type="entry name" value="AHPC"/>
    <property type="match status" value="1"/>
</dbReference>
<dbReference type="SUPFAM" id="SSF52833">
    <property type="entry name" value="Thioredoxin-like"/>
    <property type="match status" value="1"/>
</dbReference>
<dbReference type="PROSITE" id="PS51352">
    <property type="entry name" value="THIOREDOXIN_2"/>
    <property type="match status" value="1"/>
</dbReference>
<keyword id="KW-0049">Antioxidant</keyword>
<keyword id="KW-0150">Chloroplast</keyword>
<keyword id="KW-1015">Disulfide bond</keyword>
<keyword id="KW-0560">Oxidoreductase</keyword>
<keyword id="KW-0575">Peroxidase</keyword>
<keyword id="KW-0934">Plastid</keyword>
<keyword id="KW-0676">Redox-active center</keyword>
<accession>Q1XDL4</accession>
<evidence type="ECO:0000250" key="1"/>
<evidence type="ECO:0000250" key="2">
    <source>
        <dbReference type="UniProtKB" id="Q06830"/>
    </source>
</evidence>
<evidence type="ECO:0000255" key="3">
    <source>
        <dbReference type="PROSITE-ProRule" id="PRU00691"/>
    </source>
</evidence>
<evidence type="ECO:0000305" key="4"/>
<feature type="chain" id="PRO_0000277319" description="Putative peroxiredoxin ycf42">
    <location>
        <begin position="1"/>
        <end position="199"/>
    </location>
</feature>
<feature type="domain" description="Thioredoxin" evidence="3">
    <location>
        <begin position="8"/>
        <end position="165"/>
    </location>
</feature>
<feature type="active site" description="Cysteine sulfenic acid (-SOH) intermediate" evidence="2">
    <location>
        <position position="53"/>
    </location>
</feature>
<feature type="disulfide bond" description="Interchain (with C-174); in linked form" evidence="2">
    <location>
        <position position="53"/>
    </location>
</feature>
<feature type="disulfide bond" description="Interchain (with C-53); in linked form" evidence="2">
    <location>
        <position position="174"/>
    </location>
</feature>
<reference key="1">
    <citation type="submission" date="2003-11" db="EMBL/GenBank/DDBJ databases">
        <title>Whole genome sequence of Porphyra yezoensis chloroplast.</title>
        <authorList>
            <person name="Kunimoto M."/>
            <person name="Morishima K."/>
            <person name="Yoshikawa M."/>
            <person name="Fukuda S."/>
            <person name="Kobayashi T."/>
            <person name="Kobayashi M."/>
            <person name="Okazaki T."/>
            <person name="Ohara I."/>
            <person name="Nakayama I."/>
        </authorList>
    </citation>
    <scope>NUCLEOTIDE SEQUENCE [LARGE SCALE GENOMIC DNA]</scope>
    <source>
        <strain>U-51</strain>
    </source>
</reference>
<sequence>MISGPNCLRVGQLAPDFSATAVYDQEFKTLKLSDLKNKYIVLFFYPLDFTFVCPTEITAFSDKYNAFSELNTEVLGVSVDSEYSHLAWLQTDRESGGLGDLSYPLVSDLKKEISAAYNVLNSDGVALRGLFIIDPKGIIQYSTINNLEFGRSVEETLRVLQAIQYVQSHPDEVCPANWKPGDKTMNPDPIKSKNYFAAA</sequence>